<dbReference type="EC" id="2.7.11.1"/>
<dbReference type="EMBL" id="AY277589">
    <property type="protein sequence ID" value="AAP34402.1"/>
    <property type="molecule type" value="mRNA"/>
</dbReference>
<dbReference type="EMBL" id="AC127580">
    <property type="status" value="NOT_ANNOTATED_CDS"/>
    <property type="molecule type" value="Genomic_DNA"/>
</dbReference>
<dbReference type="EMBL" id="AK173103">
    <property type="protein sequence ID" value="BAD32381.1"/>
    <property type="molecule type" value="mRNA"/>
</dbReference>
<dbReference type="EMBL" id="BC049921">
    <property type="protein sequence ID" value="AAH49921.1"/>
    <property type="molecule type" value="mRNA"/>
</dbReference>
<dbReference type="CCDS" id="CCDS26176.1"/>
<dbReference type="RefSeq" id="NP_898837.2">
    <property type="nucleotide sequence ID" value="NM_183016.2"/>
</dbReference>
<dbReference type="SMR" id="Q7TT50"/>
<dbReference type="BioGRID" id="229972">
    <property type="interactions" value="8"/>
</dbReference>
<dbReference type="FunCoup" id="Q7TT50">
    <property type="interactions" value="2006"/>
</dbReference>
<dbReference type="IntAct" id="Q7TT50">
    <property type="interactions" value="1"/>
</dbReference>
<dbReference type="MINT" id="Q7TT50"/>
<dbReference type="STRING" id="10090.ENSMUSP00000042565"/>
<dbReference type="GlyGen" id="Q7TT50">
    <property type="glycosylation" value="2 sites, 1 O-linked glycan (1 site)"/>
</dbReference>
<dbReference type="iPTMnet" id="Q7TT50"/>
<dbReference type="PhosphoSitePlus" id="Q7TT50"/>
<dbReference type="SwissPalm" id="Q7TT50"/>
<dbReference type="jPOST" id="Q7TT50"/>
<dbReference type="PaxDb" id="10090-ENSMUSP00000042565"/>
<dbReference type="ProteomicsDB" id="290056"/>
<dbReference type="Pumba" id="Q7TT50"/>
<dbReference type="Antibodypedia" id="14692">
    <property type="antibodies" value="175 antibodies from 28 providers"/>
</dbReference>
<dbReference type="DNASU" id="217866"/>
<dbReference type="Ensembl" id="ENSMUST00000041965.5">
    <property type="protein sequence ID" value="ENSMUSP00000042565.4"/>
    <property type="gene ID" value="ENSMUSG00000021279.6"/>
</dbReference>
<dbReference type="GeneID" id="217866"/>
<dbReference type="KEGG" id="mmu:217866"/>
<dbReference type="UCSC" id="uc007pct.2">
    <property type="organism name" value="mouse"/>
</dbReference>
<dbReference type="AGR" id="MGI:2136459"/>
<dbReference type="CTD" id="9578"/>
<dbReference type="MGI" id="MGI:2136459">
    <property type="gene designation" value="Cdc42bpb"/>
</dbReference>
<dbReference type="VEuPathDB" id="HostDB:ENSMUSG00000021279"/>
<dbReference type="eggNOG" id="KOG0612">
    <property type="taxonomic scope" value="Eukaryota"/>
</dbReference>
<dbReference type="GeneTree" id="ENSGT01030000234517"/>
<dbReference type="HOGENOM" id="CLU_000288_140_3_1"/>
<dbReference type="InParanoid" id="Q7TT50"/>
<dbReference type="OMA" id="ELEALKX"/>
<dbReference type="PhylomeDB" id="Q7TT50"/>
<dbReference type="TreeFam" id="TF313551"/>
<dbReference type="Reactome" id="R-MMU-9013406">
    <property type="pathway name" value="RHOQ GTPase cycle"/>
</dbReference>
<dbReference type="BioGRID-ORCS" id="217866">
    <property type="hits" value="2 hits in 82 CRISPR screens"/>
</dbReference>
<dbReference type="CD-CODE" id="CE726F99">
    <property type="entry name" value="Postsynaptic density"/>
</dbReference>
<dbReference type="ChiTaRS" id="Cdc42bpb">
    <property type="organism name" value="mouse"/>
</dbReference>
<dbReference type="PRO" id="PR:Q7TT50"/>
<dbReference type="Proteomes" id="UP000000589">
    <property type="component" value="Chromosome 12"/>
</dbReference>
<dbReference type="RNAct" id="Q7TT50">
    <property type="molecule type" value="protein"/>
</dbReference>
<dbReference type="Bgee" id="ENSMUSG00000021279">
    <property type="expression patterns" value="Expressed in animal zygote and 220 other cell types or tissues"/>
</dbReference>
<dbReference type="ExpressionAtlas" id="Q7TT50">
    <property type="expression patterns" value="baseline and differential"/>
</dbReference>
<dbReference type="GO" id="GO:0042641">
    <property type="term" value="C:actomyosin"/>
    <property type="evidence" value="ECO:0007669"/>
    <property type="project" value="Ensembl"/>
</dbReference>
<dbReference type="GO" id="GO:0031252">
    <property type="term" value="C:cell leading edge"/>
    <property type="evidence" value="ECO:0000250"/>
    <property type="project" value="UniProtKB"/>
</dbReference>
<dbReference type="GO" id="GO:0005911">
    <property type="term" value="C:cell-cell junction"/>
    <property type="evidence" value="ECO:0000250"/>
    <property type="project" value="UniProtKB"/>
</dbReference>
<dbReference type="GO" id="GO:0005737">
    <property type="term" value="C:cytoplasm"/>
    <property type="evidence" value="ECO:0007669"/>
    <property type="project" value="UniProtKB-SubCell"/>
</dbReference>
<dbReference type="GO" id="GO:0030027">
    <property type="term" value="C:lamellipodium"/>
    <property type="evidence" value="ECO:0000250"/>
    <property type="project" value="UniProtKB"/>
</dbReference>
<dbReference type="GO" id="GO:0005886">
    <property type="term" value="C:plasma membrane"/>
    <property type="evidence" value="ECO:0007669"/>
    <property type="project" value="UniProtKB-SubCell"/>
</dbReference>
<dbReference type="GO" id="GO:0005524">
    <property type="term" value="F:ATP binding"/>
    <property type="evidence" value="ECO:0000250"/>
    <property type="project" value="UniProtKB"/>
</dbReference>
<dbReference type="GO" id="GO:0000287">
    <property type="term" value="F:magnesium ion binding"/>
    <property type="evidence" value="ECO:0000250"/>
    <property type="project" value="UniProtKB"/>
</dbReference>
<dbReference type="GO" id="GO:0106310">
    <property type="term" value="F:protein serine kinase activity"/>
    <property type="evidence" value="ECO:0007669"/>
    <property type="project" value="RHEA"/>
</dbReference>
<dbReference type="GO" id="GO:0004674">
    <property type="term" value="F:protein serine/threonine kinase activity"/>
    <property type="evidence" value="ECO:0000250"/>
    <property type="project" value="UniProtKB"/>
</dbReference>
<dbReference type="GO" id="GO:0044877">
    <property type="term" value="F:protein-containing complex binding"/>
    <property type="evidence" value="ECO:0007669"/>
    <property type="project" value="Ensembl"/>
</dbReference>
<dbReference type="GO" id="GO:0008270">
    <property type="term" value="F:zinc ion binding"/>
    <property type="evidence" value="ECO:0007669"/>
    <property type="project" value="UniProtKB-KW"/>
</dbReference>
<dbReference type="GO" id="GO:0030036">
    <property type="term" value="P:actin cytoskeleton organization"/>
    <property type="evidence" value="ECO:0000250"/>
    <property type="project" value="UniProtKB"/>
</dbReference>
<dbReference type="GO" id="GO:0031032">
    <property type="term" value="P:actomyosin structure organization"/>
    <property type="evidence" value="ECO:0007669"/>
    <property type="project" value="Ensembl"/>
</dbReference>
<dbReference type="GO" id="GO:0016477">
    <property type="term" value="P:cell migration"/>
    <property type="evidence" value="ECO:0007669"/>
    <property type="project" value="Ensembl"/>
</dbReference>
<dbReference type="GO" id="GO:0006468">
    <property type="term" value="P:protein phosphorylation"/>
    <property type="evidence" value="ECO:0000250"/>
    <property type="project" value="UniProtKB"/>
</dbReference>
<dbReference type="CDD" id="cd00132">
    <property type="entry name" value="CRIB"/>
    <property type="match status" value="1"/>
</dbReference>
<dbReference type="CDD" id="cd01243">
    <property type="entry name" value="PH_MRCK"/>
    <property type="match status" value="1"/>
</dbReference>
<dbReference type="CDD" id="cd05624">
    <property type="entry name" value="STKc_MRCK_beta"/>
    <property type="match status" value="1"/>
</dbReference>
<dbReference type="FunFam" id="2.30.29.30:FF:000140">
    <property type="entry name" value="CDC42 binding protein kinase beta"/>
    <property type="match status" value="1"/>
</dbReference>
<dbReference type="FunFam" id="1.10.510.10:FF:000014">
    <property type="entry name" value="Non-specific serine/threonine protein kinase"/>
    <property type="match status" value="1"/>
</dbReference>
<dbReference type="FunFam" id="1.20.5.340:FF:000010">
    <property type="entry name" value="Non-specific serine/threonine protein kinase"/>
    <property type="match status" value="1"/>
</dbReference>
<dbReference type="FunFam" id="3.30.60.20:FF:000005">
    <property type="entry name" value="Non-specific serine/threonine protein kinase"/>
    <property type="match status" value="1"/>
</dbReference>
<dbReference type="FunFam" id="3.30.200.20:FF:001044">
    <property type="entry name" value="Serine/threonine-protein kinase MRCK beta"/>
    <property type="match status" value="1"/>
</dbReference>
<dbReference type="FunFam" id="3.30.200.20:FF:001209">
    <property type="entry name" value="Serine/threonine-protein kinase MRCK beta"/>
    <property type="match status" value="1"/>
</dbReference>
<dbReference type="Gene3D" id="1.20.5.340">
    <property type="match status" value="1"/>
</dbReference>
<dbReference type="Gene3D" id="3.30.60.20">
    <property type="match status" value="1"/>
</dbReference>
<dbReference type="Gene3D" id="3.30.200.20">
    <property type="entry name" value="Phosphorylase Kinase, domain 1"/>
    <property type="match status" value="1"/>
</dbReference>
<dbReference type="Gene3D" id="2.30.29.30">
    <property type="entry name" value="Pleckstrin-homology domain (PH domain)/Phosphotyrosine-binding domain (PTB)"/>
    <property type="match status" value="1"/>
</dbReference>
<dbReference type="Gene3D" id="1.10.510.10">
    <property type="entry name" value="Transferase(Phosphotransferase) domain 1"/>
    <property type="match status" value="1"/>
</dbReference>
<dbReference type="InterPro" id="IPR000961">
    <property type="entry name" value="AGC-kinase_C"/>
</dbReference>
<dbReference type="InterPro" id="IPR046349">
    <property type="entry name" value="C1-like_sf"/>
</dbReference>
<dbReference type="InterPro" id="IPR001180">
    <property type="entry name" value="CNH_dom"/>
</dbReference>
<dbReference type="InterPro" id="IPR000095">
    <property type="entry name" value="CRIB_dom"/>
</dbReference>
<dbReference type="InterPro" id="IPR020454">
    <property type="entry name" value="DAG/PE-bd"/>
</dbReference>
<dbReference type="InterPro" id="IPR031597">
    <property type="entry name" value="KELK"/>
</dbReference>
<dbReference type="InterPro" id="IPR011009">
    <property type="entry name" value="Kinase-like_dom_sf"/>
</dbReference>
<dbReference type="InterPro" id="IPR042718">
    <property type="entry name" value="MRCKB_STKc"/>
</dbReference>
<dbReference type="InterPro" id="IPR014930">
    <property type="entry name" value="Myotonic_dystrophy_kinase_coil"/>
</dbReference>
<dbReference type="InterPro" id="IPR002219">
    <property type="entry name" value="PE/DAG-bd"/>
</dbReference>
<dbReference type="InterPro" id="IPR011993">
    <property type="entry name" value="PH-like_dom_sf"/>
</dbReference>
<dbReference type="InterPro" id="IPR001849">
    <property type="entry name" value="PH_domain"/>
</dbReference>
<dbReference type="InterPro" id="IPR000719">
    <property type="entry name" value="Prot_kinase_dom"/>
</dbReference>
<dbReference type="InterPro" id="IPR017441">
    <property type="entry name" value="Protein_kinase_ATP_BS"/>
</dbReference>
<dbReference type="InterPro" id="IPR050839">
    <property type="entry name" value="Rho-assoc_Ser/Thr_Kinase"/>
</dbReference>
<dbReference type="InterPro" id="IPR008271">
    <property type="entry name" value="Ser/Thr_kinase_AS"/>
</dbReference>
<dbReference type="PANTHER" id="PTHR22988">
    <property type="entry name" value="MYOTONIC DYSTROPHY S/T KINASE-RELATED"/>
    <property type="match status" value="1"/>
</dbReference>
<dbReference type="PANTHER" id="PTHR22988:SF34">
    <property type="entry name" value="SERINE_THREONINE-PROTEIN KINASE MRCK BETA"/>
    <property type="match status" value="1"/>
</dbReference>
<dbReference type="Pfam" id="PF00130">
    <property type="entry name" value="C1_1"/>
    <property type="match status" value="1"/>
</dbReference>
<dbReference type="Pfam" id="PF00780">
    <property type="entry name" value="CNH"/>
    <property type="match status" value="1"/>
</dbReference>
<dbReference type="Pfam" id="PF08826">
    <property type="entry name" value="DMPK_coil"/>
    <property type="match status" value="1"/>
</dbReference>
<dbReference type="Pfam" id="PF15796">
    <property type="entry name" value="KELK"/>
    <property type="match status" value="1"/>
</dbReference>
<dbReference type="Pfam" id="PF25346">
    <property type="entry name" value="PH_MRCK"/>
    <property type="match status" value="1"/>
</dbReference>
<dbReference type="Pfam" id="PF00069">
    <property type="entry name" value="Pkinase"/>
    <property type="match status" value="1"/>
</dbReference>
<dbReference type="PRINTS" id="PR00008">
    <property type="entry name" value="DAGPEDOMAIN"/>
</dbReference>
<dbReference type="SMART" id="SM00109">
    <property type="entry name" value="C1"/>
    <property type="match status" value="1"/>
</dbReference>
<dbReference type="SMART" id="SM00036">
    <property type="entry name" value="CNH"/>
    <property type="match status" value="1"/>
</dbReference>
<dbReference type="SMART" id="SM00285">
    <property type="entry name" value="PBD"/>
    <property type="match status" value="1"/>
</dbReference>
<dbReference type="SMART" id="SM00233">
    <property type="entry name" value="PH"/>
    <property type="match status" value="1"/>
</dbReference>
<dbReference type="SMART" id="SM00133">
    <property type="entry name" value="S_TK_X"/>
    <property type="match status" value="1"/>
</dbReference>
<dbReference type="SMART" id="SM00220">
    <property type="entry name" value="S_TKc"/>
    <property type="match status" value="1"/>
</dbReference>
<dbReference type="SUPFAM" id="SSF57889">
    <property type="entry name" value="Cysteine-rich domain"/>
    <property type="match status" value="1"/>
</dbReference>
<dbReference type="SUPFAM" id="SSF50729">
    <property type="entry name" value="PH domain-like"/>
    <property type="match status" value="1"/>
</dbReference>
<dbReference type="SUPFAM" id="SSF56112">
    <property type="entry name" value="Protein kinase-like (PK-like)"/>
    <property type="match status" value="1"/>
</dbReference>
<dbReference type="PROSITE" id="PS51285">
    <property type="entry name" value="AGC_KINASE_CTER"/>
    <property type="match status" value="1"/>
</dbReference>
<dbReference type="PROSITE" id="PS50219">
    <property type="entry name" value="CNH"/>
    <property type="match status" value="1"/>
</dbReference>
<dbReference type="PROSITE" id="PS50108">
    <property type="entry name" value="CRIB"/>
    <property type="match status" value="1"/>
</dbReference>
<dbReference type="PROSITE" id="PS50003">
    <property type="entry name" value="PH_DOMAIN"/>
    <property type="match status" value="1"/>
</dbReference>
<dbReference type="PROSITE" id="PS00107">
    <property type="entry name" value="PROTEIN_KINASE_ATP"/>
    <property type="match status" value="1"/>
</dbReference>
<dbReference type="PROSITE" id="PS50011">
    <property type="entry name" value="PROTEIN_KINASE_DOM"/>
    <property type="match status" value="1"/>
</dbReference>
<dbReference type="PROSITE" id="PS00108">
    <property type="entry name" value="PROTEIN_KINASE_ST"/>
    <property type="match status" value="1"/>
</dbReference>
<dbReference type="PROSITE" id="PS00479">
    <property type="entry name" value="ZF_DAG_PE_1"/>
    <property type="match status" value="1"/>
</dbReference>
<dbReference type="PROSITE" id="PS50081">
    <property type="entry name" value="ZF_DAG_PE_2"/>
    <property type="match status" value="1"/>
</dbReference>
<organism>
    <name type="scientific">Mus musculus</name>
    <name type="common">Mouse</name>
    <dbReference type="NCBI Taxonomy" id="10090"/>
    <lineage>
        <taxon>Eukaryota</taxon>
        <taxon>Metazoa</taxon>
        <taxon>Chordata</taxon>
        <taxon>Craniata</taxon>
        <taxon>Vertebrata</taxon>
        <taxon>Euteleostomi</taxon>
        <taxon>Mammalia</taxon>
        <taxon>Eutheria</taxon>
        <taxon>Euarchontoglires</taxon>
        <taxon>Glires</taxon>
        <taxon>Rodentia</taxon>
        <taxon>Myomorpha</taxon>
        <taxon>Muroidea</taxon>
        <taxon>Muridae</taxon>
        <taxon>Murinae</taxon>
        <taxon>Mus</taxon>
        <taxon>Mus</taxon>
    </lineage>
</organism>
<proteinExistence type="evidence at protein level"/>
<sequence>MSAKVRLKKLEQLLLDGPWRNDSALSVETLLDVLVCLYTECSHSALRRDKYVAEFLEWAKPFTQLVKDMQLHREDFEIIKVIGRGAFGEVAVVKMKNTERIYAMKILNKWEMLKRAETACFREERDVLVNGDCQWITALHYAFQDENYLYLVMDYYVGGDLLTLLSKFEDKLPEDMARFYIGEMVLAIDSIHQLHYVHRDIKPDNVLLDVNGHIRLADFGSCLKMNDDGTVQSSVAVGTPDYISPEILQAMEDGMGKYGPECDWWSLGVCMYEMLYGETPFYAESLVETYGKIMNHEERFQFPSHVTDVSEEAKDLIQRLICSRERRLGQNGIEDFKKHAFFEGLNWENIRNLEAPYIPDVSSPSDTSNFDVDDDMLRNIEILPPGSHTGFSGLHLPFIGFTFTTESCFSDRGSLKSMTQSNTLTKDEDVQRDLENSLQIEAYERRIRRLEQEKLELSRKLQESTQTVQSLHGSTRALGNSNRDKEIKRLNEELERMKSKMADSNRLERQLEDTVTLRQEHEDSTHRLKGLEKQYRLARQEKEELHKQLVEASERLKSQTKELKDAHQQRKRALQEFSELNERMSELRSLKQKVSRQLRDKEEEMEVAMQKIDSMRQDLRKSEKSRKELEARLEDAAAEASKERKLREHSESFCKQMERELEALKVKQGGRGPGAASEHQQEISKIRSELEKKVLFYEEELVRREASHVLEVKNVKKEVHDSESHQLALQKEVLMLKDKLEKSKRERHSEMEEAIGTVKDKYERERAMLFDENKKLTAENEKLCSFVDKLTAQNRQLEDELQDLASKKESVAHWEAQIAEIIQWVSDEKDARGYLQALASKMTEELETLRSSSLGSRTLDPLWKVRRSQKLDMSARLELQSALEAEIRAKQLVQEELRKVKDSSLAFESKLKESEAKNRELLEEMQSLRKRMEEKFRADTGLKLPDFQDSIFEYFNTAPLAHDLTFRTSSASDQETQASKMDLSPSVSVATSTEQQEDMARPQQRPSPVPLPSTQALAMAGPKPKAHQFSIKSFPSPTQCSHCTSLMVGLIRQGYACEVCAFSCHVSCKDSAPQVCPIPPEQSKRPLGVDVQRGIGTAYKGYVKVPKPTGVKKGWQRAYAVVCDCKLFLYDLPEGKSTQPGVVASQVLDLRDEEFAVSSVLASDVIHATRRDIPCIFRVTASLLGSPSKTSSLLILTENENEKRKWVGILEGLQAILHKNRLKSQVVHVAQEAYDSSLPLIKAVLAAAIVDGDRIAVGLEEGLYVIELTRDVIVRAADCKKVYQIELAPKEKIAILLCGRNHHVHLYPWSSFDGAEASNFDIKLPETKGCQLIATGTLRKSSSTCLFVAVKRLILCYEIQRTKPFHRKFSELVAPGHVQWMAVFKDRLCVGYPSGFSLLSIQGDGPPLDLVNPTDPSLAFLSQQSFDALCAVELKSEEYLLCFSHMGLYVDPQGRRSRMQELMWPAAPVACSCSPTHVTVYSEYGVDVFDVRTMEWVQTIGLRRIRPLNSDGSLNLLGCEPPRLIYFKNKFSGTILNVPDTSDNSKKQMLRTRSKRRFVFKVPEEERLQQRREMLRDPELRSKMISNPTNFNHVAHMGPGDGMQVLMDLPLSAAPTVQEEKQGPTPAGLPRQPPSRSKPYVSWPSSGGSEPGVPVPLRSMSDPDQDFDKEPDSDSTKHSTPSNSSNPSGPPSPNSPHRSQLPMEGLDQPSCDA</sequence>
<comment type="function">
    <text evidence="6 18">Serine/threonine-protein kinase which is an important downstream effector of CDC42 and plays a role in the regulation of cytoskeleton reorganization and cell migration. Regulates actin cytoskeletal reorganization via phosphorylation of PPP1R12C and MYL9/MLC2. In concert with MYO18A and LURAP1, is involved in modulating lamellar actomyosin retrograde flow that is crucial to cell protrusion and migration. Phosphorylates PPP1R12A (By similarity). In concert with FAM89B/LRAP25 mediates the targeting of LIMK1 to the lamellipodium resulting in its activation and subsequent phosphorylation of CFL1 which is important for lamellipodial F-actin regulation (PubMed:25107909).</text>
</comment>
<comment type="catalytic activity">
    <reaction evidence="5">
        <text>L-seryl-[protein] + ATP = O-phospho-L-seryl-[protein] + ADP + H(+)</text>
        <dbReference type="Rhea" id="RHEA:17989"/>
        <dbReference type="Rhea" id="RHEA-COMP:9863"/>
        <dbReference type="Rhea" id="RHEA-COMP:11604"/>
        <dbReference type="ChEBI" id="CHEBI:15378"/>
        <dbReference type="ChEBI" id="CHEBI:29999"/>
        <dbReference type="ChEBI" id="CHEBI:30616"/>
        <dbReference type="ChEBI" id="CHEBI:83421"/>
        <dbReference type="ChEBI" id="CHEBI:456216"/>
        <dbReference type="EC" id="2.7.11.1"/>
    </reaction>
</comment>
<comment type="catalytic activity">
    <reaction evidence="5">
        <text>L-threonyl-[protein] + ATP = O-phospho-L-threonyl-[protein] + ADP + H(+)</text>
        <dbReference type="Rhea" id="RHEA:46608"/>
        <dbReference type="Rhea" id="RHEA-COMP:11060"/>
        <dbReference type="Rhea" id="RHEA-COMP:11605"/>
        <dbReference type="ChEBI" id="CHEBI:15378"/>
        <dbReference type="ChEBI" id="CHEBI:30013"/>
        <dbReference type="ChEBI" id="CHEBI:30616"/>
        <dbReference type="ChEBI" id="CHEBI:61977"/>
        <dbReference type="ChEBI" id="CHEBI:456216"/>
        <dbReference type="EC" id="2.7.11.1"/>
    </reaction>
</comment>
<comment type="cofactor">
    <cofactor evidence="5">
        <name>Mg(2+)</name>
        <dbReference type="ChEBI" id="CHEBI:18420"/>
    </cofactor>
</comment>
<comment type="activity regulation">
    <text evidence="1">Maintained in an inactive, closed conformation by an interaction between the kinase domain and the negative autoregulatory C-terminal coiled-coil region. Agonist binding to the phorbol ester binding site disrupts this, releasing the kinase domain to allow N-terminus-mediated dimerization and kinase activation by transautophosphorylation. Inhibited by chelerythrine chloride (By similarity).</text>
</comment>
<comment type="subunit">
    <text evidence="6 7 17 18">Homodimer and homotetramer via the coiled coil regions. Interacts tightly with GTP-bound but not GDP-bound CDC42. Interacts with TJP1; this interaction requires the presence of catalytically active CDC42. Forms a tripartite complex with MYO18A and LURAP1 with the latter acting as an adapter connecting CDC42BPB and MYO18A. LURAP1 binding results in activation of CDC42BPB by abolition of its negative autoregulation. Interacts with STRIP1, STRN3 and SIKE1 (By similarity). Interacts with CPNE4 (via VWFA domain) (PubMed:12522145). Interacts with LURAP1 (By similarity). Interacts (via AGC-kinase C-terminal domain) with FAM89B/LRAP25 (via LRR repeat) (PubMed:25107909). Forms a tripartite complex with FAM89B/LRAP25 and LIMK1 (PubMed:25107909).</text>
</comment>
<comment type="subcellular location">
    <subcellularLocation>
        <location evidence="1">Cytoplasm</location>
    </subcellularLocation>
    <subcellularLocation>
        <location evidence="1">Cell membrane</location>
        <topology evidence="1">Peripheral membrane protein</topology>
        <orientation evidence="1">Cytoplasmic side</orientation>
    </subcellularLocation>
    <subcellularLocation>
        <location evidence="1">Cell junction</location>
    </subcellularLocation>
    <subcellularLocation>
        <location evidence="4">Cell projection</location>
        <location evidence="4">Lamellipodium</location>
    </subcellularLocation>
    <text evidence="2 4 6">Displays a dispersed punctate distribution and concentrates along the cell periphery, especially at the leading edge and cell-cell junction. This concentration is PH-domain dependent. Detected at the leading edge of migrating and wounded cells; this localization requires the presence of catalytically active CDC42. Localizes in the lamellipodium in a FAM89B/LRAP25-dependent manner.</text>
</comment>
<comment type="PTM">
    <text evidence="7">Proteolytically cleaved by caspases upon apoptosis induction.</text>
</comment>
<comment type="similarity">
    <text evidence="19">Belongs to the protein kinase superfamily. AGC Ser/Thr protein kinase family. DMPK subfamily.</text>
</comment>
<accession>Q7TT50</accession>
<accession>E9QK15</accession>
<accession>Q69ZR5</accession>
<accession>Q80W33</accession>
<reference evidence="21" key="1">
    <citation type="submission" date="2003-04" db="EMBL/GenBank/DDBJ databases">
        <authorList>
            <person name="Huang C.Q."/>
            <person name="Wu S.L."/>
            <person name="Cheng Z."/>
        </authorList>
    </citation>
    <scope>NUCLEOTIDE SEQUENCE [MRNA]</scope>
</reference>
<reference key="2">
    <citation type="journal article" date="2009" name="PLoS Biol.">
        <title>Lineage-specific biology revealed by a finished genome assembly of the mouse.</title>
        <authorList>
            <person name="Church D.M."/>
            <person name="Goodstadt L."/>
            <person name="Hillier L.W."/>
            <person name="Zody M.C."/>
            <person name="Goldstein S."/>
            <person name="She X."/>
            <person name="Bult C.J."/>
            <person name="Agarwala R."/>
            <person name="Cherry J.L."/>
            <person name="DiCuccio M."/>
            <person name="Hlavina W."/>
            <person name="Kapustin Y."/>
            <person name="Meric P."/>
            <person name="Maglott D."/>
            <person name="Birtle Z."/>
            <person name="Marques A.C."/>
            <person name="Graves T."/>
            <person name="Zhou S."/>
            <person name="Teague B."/>
            <person name="Potamousis K."/>
            <person name="Churas C."/>
            <person name="Place M."/>
            <person name="Herschleb J."/>
            <person name="Runnheim R."/>
            <person name="Forrest D."/>
            <person name="Amos-Landgraf J."/>
            <person name="Schwartz D.C."/>
            <person name="Cheng Z."/>
            <person name="Lindblad-Toh K."/>
            <person name="Eichler E.E."/>
            <person name="Ponting C.P."/>
        </authorList>
    </citation>
    <scope>NUCLEOTIDE SEQUENCE [LARGE SCALE GENOMIC DNA]</scope>
    <source>
        <strain>C57BL/6J</strain>
    </source>
</reference>
<reference evidence="19 22" key="3">
    <citation type="journal article" date="2004" name="DNA Res.">
        <title>Prediction of the coding sequences of mouse homologues of KIAA gene: IV. The complete nucleotide sequences of 500 mouse KIAA-homologous cDNAs identified by screening of terminal sequences of cDNA clones randomly sampled from size-fractionated libraries.</title>
        <authorList>
            <person name="Okazaki N."/>
            <person name="Kikuno R."/>
            <person name="Ohara R."/>
            <person name="Inamoto S."/>
            <person name="Koseki H."/>
            <person name="Hiraoka S."/>
            <person name="Saga Y."/>
            <person name="Seino S."/>
            <person name="Nishimura M."/>
            <person name="Kaisho T."/>
            <person name="Hoshino K."/>
            <person name="Kitamura H."/>
            <person name="Nagase T."/>
            <person name="Ohara O."/>
            <person name="Koga H."/>
        </authorList>
    </citation>
    <scope>NUCLEOTIDE SEQUENCE [LARGE SCALE MRNA] OF 628-1713</scope>
    <source>
        <tissue evidence="22">Fetal brain</tissue>
    </source>
</reference>
<reference evidence="21" key="4">
    <citation type="submission" date="2009-01" db="UniProtKB">
        <authorList>
            <person name="Lubec G."/>
            <person name="Sunyer B."/>
            <person name="Chen W.-Q."/>
        </authorList>
    </citation>
    <scope>PROTEIN SEQUENCE OF 633-642</scope>
    <scope>IDENTIFICATION BY MASS SPECTROMETRY</scope>
    <source>
        <strain>OF1</strain>
        <tissue>Hippocampus</tissue>
    </source>
</reference>
<reference evidence="19 20" key="5">
    <citation type="journal article" date="2004" name="Genome Res.">
        <title>The status, quality, and expansion of the NIH full-length cDNA project: the Mammalian Gene Collection (MGC).</title>
        <authorList>
            <consortium name="The MGC Project Team"/>
        </authorList>
    </citation>
    <scope>NUCLEOTIDE SEQUENCE [LARGE SCALE MRNA] OF 1139-1713</scope>
    <source>
        <strain evidence="20">FVB/N</strain>
        <tissue evidence="20">Kidney</tissue>
    </source>
</reference>
<reference key="6">
    <citation type="journal article" date="2003" name="J. Biol. Chem.">
        <title>Identification of targets for calcium signaling through the copine family of proteins. Characterization of a coiled-coil copine-binding motif.</title>
        <authorList>
            <person name="Tomsig J.L."/>
            <person name="Snyder S.L."/>
            <person name="Creutz C.E."/>
        </authorList>
    </citation>
    <scope>INTERACTION WITH CPNE4</scope>
</reference>
<reference key="7">
    <citation type="journal article" date="2005" name="Nat. Biotechnol.">
        <title>Immunoaffinity profiling of tyrosine phosphorylation in cancer cells.</title>
        <authorList>
            <person name="Rush J."/>
            <person name="Moritz A."/>
            <person name="Lee K.A."/>
            <person name="Guo A."/>
            <person name="Goss V.L."/>
            <person name="Spek E.J."/>
            <person name="Zhang H."/>
            <person name="Zha X.-M."/>
            <person name="Polakiewicz R.D."/>
            <person name="Comb M.J."/>
        </authorList>
    </citation>
    <scope>PHOSPHORYLATION [LARGE SCALE ANALYSIS] AT TYR-954</scope>
    <scope>IDENTIFICATION BY MASS SPECTROMETRY [LARGE SCALE ANALYSIS]</scope>
</reference>
<reference key="8">
    <citation type="journal article" date="2007" name="Proc. Natl. Acad. Sci. U.S.A.">
        <title>Large-scale phosphorylation analysis of mouse liver.</title>
        <authorList>
            <person name="Villen J."/>
            <person name="Beausoleil S.A."/>
            <person name="Gerber S.A."/>
            <person name="Gygi S.P."/>
        </authorList>
    </citation>
    <scope>PHOSPHORYLATION [LARGE SCALE ANALYSIS] AT SER-1692 AND SER-1695</scope>
    <scope>IDENTIFICATION BY MASS SPECTROMETRY [LARGE SCALE ANALYSIS]</scope>
    <source>
        <tissue>Liver</tissue>
    </source>
</reference>
<reference key="9">
    <citation type="journal article" date="2009" name="Immunity">
        <title>The phagosomal proteome in interferon-gamma-activated macrophages.</title>
        <authorList>
            <person name="Trost M."/>
            <person name="English L."/>
            <person name="Lemieux S."/>
            <person name="Courcelles M."/>
            <person name="Desjardins M."/>
            <person name="Thibault P."/>
        </authorList>
    </citation>
    <scope>PHOSPHORYLATION [LARGE SCALE ANALYSIS] AT SER-1692</scope>
    <scope>IDENTIFICATION BY MASS SPECTROMETRY [LARGE SCALE ANALYSIS]</scope>
</reference>
<reference key="10">
    <citation type="journal article" date="2010" name="Cell">
        <title>A tissue-specific atlas of mouse protein phosphorylation and expression.</title>
        <authorList>
            <person name="Huttlin E.L."/>
            <person name="Jedrychowski M.P."/>
            <person name="Elias J.E."/>
            <person name="Goswami T."/>
            <person name="Rad R."/>
            <person name="Beausoleil S.A."/>
            <person name="Villen J."/>
            <person name="Haas W."/>
            <person name="Sowa M.E."/>
            <person name="Gygi S.P."/>
        </authorList>
    </citation>
    <scope>PHOSPHORYLATION [LARGE SCALE ANALYSIS] AT SER-927; SER-1688; SER-1692 AND SER-1695</scope>
    <scope>IDENTIFICATION BY MASS SPECTROMETRY [LARGE SCALE ANALYSIS]</scope>
    <source>
        <tissue>Brain</tissue>
        <tissue>Brown adipose tissue</tissue>
        <tissue>Heart</tissue>
        <tissue>Kidney</tissue>
        <tissue>Liver</tissue>
        <tissue>Lung</tissue>
        <tissue>Pancreas</tissue>
        <tissue>Spleen</tissue>
        <tissue>Testis</tissue>
    </source>
</reference>
<reference key="11">
    <citation type="journal article" date="2014" name="J. Biol. Chem.">
        <title>Adaptor protein LRAP25 mediates myotonic dystrophy kinase-related Cdc42-binding kinase (MRCK) regulation of LIMK1 protein in lamellipodial F-actin dynamics.</title>
        <authorList>
            <person name="Lee I.C."/>
            <person name="Leung T."/>
            <person name="Tan I."/>
        </authorList>
    </citation>
    <scope>FUNCTION</scope>
    <scope>INTERACTION WITH FAM89B AND LIMK1</scope>
</reference>
<keyword id="KW-0067">ATP-binding</keyword>
<keyword id="KW-0965">Cell junction</keyword>
<keyword id="KW-1003">Cell membrane</keyword>
<keyword id="KW-0966">Cell projection</keyword>
<keyword id="KW-0175">Coiled coil</keyword>
<keyword id="KW-0963">Cytoplasm</keyword>
<keyword id="KW-0903">Direct protein sequencing</keyword>
<keyword id="KW-0418">Kinase</keyword>
<keyword id="KW-0460">Magnesium</keyword>
<keyword id="KW-0472">Membrane</keyword>
<keyword id="KW-0479">Metal-binding</keyword>
<keyword id="KW-0488">Methylation</keyword>
<keyword id="KW-0547">Nucleotide-binding</keyword>
<keyword id="KW-0597">Phosphoprotein</keyword>
<keyword id="KW-1185">Reference proteome</keyword>
<keyword id="KW-0723">Serine/threonine-protein kinase</keyword>
<keyword id="KW-0808">Transferase</keyword>
<keyword id="KW-0862">Zinc</keyword>
<keyword id="KW-0863">Zinc-finger</keyword>
<feature type="chain" id="PRO_0000086395" description="Serine/threonine-protein kinase MRCK beta">
    <location>
        <begin position="1"/>
        <end position="1713"/>
    </location>
</feature>
<feature type="domain" description="Protein kinase" evidence="5 11">
    <location>
        <begin position="76"/>
        <end position="342"/>
    </location>
</feature>
<feature type="domain" description="AGC-kinase C-terminal" evidence="13">
    <location>
        <begin position="343"/>
        <end position="413"/>
    </location>
</feature>
<feature type="domain" description="PH" evidence="10">
    <location>
        <begin position="1096"/>
        <end position="1215"/>
    </location>
</feature>
<feature type="domain" description="CNH" evidence="14">
    <location>
        <begin position="1241"/>
        <end position="1515"/>
    </location>
</feature>
<feature type="domain" description="CRIB" evidence="9">
    <location>
        <begin position="1585"/>
        <end position="1598"/>
    </location>
</feature>
<feature type="zinc finger region" description="Phorbol-ester/DAG-type" evidence="12">
    <location>
        <begin position="1026"/>
        <end position="1076"/>
    </location>
</feature>
<feature type="region of interest" description="Disordered" evidence="16">
    <location>
        <begin position="971"/>
        <end position="1022"/>
    </location>
</feature>
<feature type="region of interest" description="Disordered" evidence="16">
    <location>
        <begin position="1616"/>
        <end position="1713"/>
    </location>
</feature>
<feature type="coiled-coil region" evidence="8">
    <location>
        <begin position="434"/>
        <end position="649"/>
    </location>
</feature>
<feature type="coiled-coil region" evidence="8">
    <location>
        <begin position="681"/>
        <end position="815"/>
    </location>
</feature>
<feature type="coiled-coil region" evidence="8">
    <location>
        <begin position="878"/>
        <end position="939"/>
    </location>
</feature>
<feature type="compositionally biased region" description="Polar residues" evidence="16">
    <location>
        <begin position="971"/>
        <end position="994"/>
    </location>
</feature>
<feature type="compositionally biased region" description="Basic and acidic residues" evidence="16">
    <location>
        <begin position="1666"/>
        <end position="1677"/>
    </location>
</feature>
<feature type="active site" description="Proton acceptor" evidence="3 11 15">
    <location>
        <position position="200"/>
    </location>
</feature>
<feature type="binding site" evidence="3 11">
    <location>
        <begin position="82"/>
        <end position="90"/>
    </location>
    <ligand>
        <name>ATP</name>
        <dbReference type="ChEBI" id="CHEBI:30616"/>
    </ligand>
</feature>
<feature type="binding site" evidence="5 11">
    <location>
        <position position="105"/>
    </location>
    <ligand>
        <name>ATP</name>
        <dbReference type="ChEBI" id="CHEBI:30616"/>
    </ligand>
</feature>
<feature type="modified residue" description="Phosphoserine; by autocatalysis" evidence="1">
    <location>
        <position position="221"/>
    </location>
</feature>
<feature type="modified residue" description="Phosphoserine; by autocatalysis" evidence="1">
    <location>
        <position position="233"/>
    </location>
</feature>
<feature type="modified residue" description="Phosphothreonine; by autocatalysis" evidence="1">
    <location>
        <position position="239"/>
    </location>
</feature>
<feature type="modified residue" description="Phosphothreonine" evidence="7">
    <location>
        <position position="423"/>
    </location>
</feature>
<feature type="modified residue" description="Omega-N-methylarginine" evidence="7">
    <location>
        <position position="671"/>
    </location>
</feature>
<feature type="modified residue" description="Phosphoserine" evidence="27">
    <location>
        <position position="927"/>
    </location>
</feature>
<feature type="modified residue" description="Phosphotyrosine" evidence="24">
    <location>
        <position position="954"/>
    </location>
</feature>
<feature type="modified residue" description="Phosphoserine" evidence="7">
    <location>
        <position position="1682"/>
    </location>
</feature>
<feature type="modified residue" description="Phosphoserine" evidence="7">
    <location>
        <position position="1684"/>
    </location>
</feature>
<feature type="modified residue" description="Phosphoserine" evidence="27">
    <location>
        <position position="1688"/>
    </location>
</feature>
<feature type="modified residue" description="Phosphoserine" evidence="25 26 27">
    <location>
        <position position="1692"/>
    </location>
</feature>
<feature type="modified residue" description="Phosphoserine" evidence="25 27">
    <location>
        <position position="1695"/>
    </location>
</feature>
<feature type="sequence conflict" description="In Ref. 1; AAP34402." evidence="19" ref="1">
    <original>K</original>
    <variation>R</variation>
    <location>
        <position position="96"/>
    </location>
</feature>
<name>MRCKB_MOUSE</name>
<evidence type="ECO:0000250" key="1"/>
<evidence type="ECO:0000250" key="2">
    <source>
        <dbReference type="UniProtKB" id="O54874"/>
    </source>
</evidence>
<evidence type="ECO:0000250" key="3">
    <source>
        <dbReference type="UniProtKB" id="P54265"/>
    </source>
</evidence>
<evidence type="ECO:0000250" key="4">
    <source>
        <dbReference type="UniProtKB" id="Q3UU96"/>
    </source>
</evidence>
<evidence type="ECO:0000250" key="5">
    <source>
        <dbReference type="UniProtKB" id="Q5VT25"/>
    </source>
</evidence>
<evidence type="ECO:0000250" key="6">
    <source>
        <dbReference type="UniProtKB" id="Q7TT49"/>
    </source>
</evidence>
<evidence type="ECO:0000250" key="7">
    <source>
        <dbReference type="UniProtKB" id="Q9Y5S2"/>
    </source>
</evidence>
<evidence type="ECO:0000255" key="8"/>
<evidence type="ECO:0000255" key="9">
    <source>
        <dbReference type="PROSITE-ProRule" id="PRU00057"/>
    </source>
</evidence>
<evidence type="ECO:0000255" key="10">
    <source>
        <dbReference type="PROSITE-ProRule" id="PRU00145"/>
    </source>
</evidence>
<evidence type="ECO:0000255" key="11">
    <source>
        <dbReference type="PROSITE-ProRule" id="PRU00159"/>
    </source>
</evidence>
<evidence type="ECO:0000255" key="12">
    <source>
        <dbReference type="PROSITE-ProRule" id="PRU00226"/>
    </source>
</evidence>
<evidence type="ECO:0000255" key="13">
    <source>
        <dbReference type="PROSITE-ProRule" id="PRU00618"/>
    </source>
</evidence>
<evidence type="ECO:0000255" key="14">
    <source>
        <dbReference type="PROSITE-ProRule" id="PRU00795"/>
    </source>
</evidence>
<evidence type="ECO:0000255" key="15">
    <source>
        <dbReference type="PROSITE-ProRule" id="PRU10027"/>
    </source>
</evidence>
<evidence type="ECO:0000256" key="16">
    <source>
        <dbReference type="SAM" id="MobiDB-lite"/>
    </source>
</evidence>
<evidence type="ECO:0000269" key="17">
    <source>
    </source>
</evidence>
<evidence type="ECO:0000269" key="18">
    <source>
    </source>
</evidence>
<evidence type="ECO:0000305" key="19"/>
<evidence type="ECO:0000312" key="20">
    <source>
        <dbReference type="EMBL" id="AAH49921.1"/>
    </source>
</evidence>
<evidence type="ECO:0000312" key="21">
    <source>
        <dbReference type="EMBL" id="AAP34402.1"/>
    </source>
</evidence>
<evidence type="ECO:0000312" key="22">
    <source>
        <dbReference type="EMBL" id="BAD32381.1"/>
    </source>
</evidence>
<evidence type="ECO:0000312" key="23">
    <source>
        <dbReference type="MGI" id="MGI:2136459"/>
    </source>
</evidence>
<evidence type="ECO:0007744" key="24">
    <source>
    </source>
</evidence>
<evidence type="ECO:0007744" key="25">
    <source>
    </source>
</evidence>
<evidence type="ECO:0007744" key="26">
    <source>
    </source>
</evidence>
<evidence type="ECO:0007744" key="27">
    <source>
    </source>
</evidence>
<gene>
    <name evidence="21 23" type="primary">Cdc42bpb</name>
    <name evidence="22" type="synonym">Kiaa1124</name>
</gene>
<protein>
    <recommendedName>
        <fullName>Serine/threonine-protein kinase MRCK beta</fullName>
        <ecNumber>2.7.11.1</ecNumber>
    </recommendedName>
    <alternativeName>
        <fullName>CDC42-binding protein kinase beta</fullName>
    </alternativeName>
    <alternativeName>
        <fullName>DMPK-like beta</fullName>
    </alternativeName>
    <alternativeName>
        <fullName>Myotonic dystrophy kinase-related CDC42-binding kinase beta</fullName>
        <shortName>MRCK beta</shortName>
        <shortName>Myotonic dystrophy protein kinase-like beta</shortName>
    </alternativeName>
</protein>